<organism>
    <name type="scientific">Bradyrhizobium diazoefficiens (strain JCM 10833 / BCRC 13528 / IAM 13628 / NBRC 14792 / USDA 110)</name>
    <dbReference type="NCBI Taxonomy" id="224911"/>
    <lineage>
        <taxon>Bacteria</taxon>
        <taxon>Pseudomonadati</taxon>
        <taxon>Pseudomonadota</taxon>
        <taxon>Alphaproteobacteria</taxon>
        <taxon>Hyphomicrobiales</taxon>
        <taxon>Nitrobacteraceae</taxon>
        <taxon>Bradyrhizobium</taxon>
    </lineage>
</organism>
<gene>
    <name evidence="1" type="primary">pqqB</name>
    <name type="ordered locus">blr6736</name>
</gene>
<feature type="chain" id="PRO_0000219997" description="Coenzyme PQQ synthesis protein B">
    <location>
        <begin position="1"/>
        <end position="309"/>
    </location>
</feature>
<sequence>MLRVVVLGAGAGGGVPQWNCGCEGCRTARAIGDELLRTQASVAFSGDGEHWFLINASPDLRQQLNATPQLHPKPGALRHTPVAGVILTNGEVDAVAGLLSMREGSPFTVYAHEKVLAILSANSIFNVLNEKNVRRQPIAISEPFEPRLVDGARSGIEVLPFAVPGKSAWYLEGKAHPGGETGDGDTLGLKITDKTTGKCFYFIAACAEVTDALKAEIDGAALVFFDGTVWQDDEMIKAGLGHKTGKSMGHVAMSGEDGAIARLADLDIDRKLFLHINNSNPALLPASPERKAAEQAGWQIPADGTEIVL</sequence>
<proteinExistence type="inferred from homology"/>
<keyword id="KW-0884">PQQ biosynthesis</keyword>
<keyword id="KW-1185">Reference proteome</keyword>
<keyword id="KW-0813">Transport</keyword>
<evidence type="ECO:0000255" key="1">
    <source>
        <dbReference type="HAMAP-Rule" id="MF_00653"/>
    </source>
</evidence>
<accession>Q89FG4</accession>
<comment type="function">
    <text evidence="1">May be involved in the transport of PQQ or its precursor to the periplasm.</text>
</comment>
<comment type="pathway">
    <text evidence="1">Cofactor biosynthesis; pyrroloquinoline quinone biosynthesis.</text>
</comment>
<comment type="similarity">
    <text evidence="1">Belongs to the PqqB family.</text>
</comment>
<name>PQQB_BRADU</name>
<reference key="1">
    <citation type="journal article" date="2002" name="DNA Res.">
        <title>Complete genomic sequence of nitrogen-fixing symbiotic bacterium Bradyrhizobium japonicum USDA110.</title>
        <authorList>
            <person name="Kaneko T."/>
            <person name="Nakamura Y."/>
            <person name="Sato S."/>
            <person name="Minamisawa K."/>
            <person name="Uchiumi T."/>
            <person name="Sasamoto S."/>
            <person name="Watanabe A."/>
            <person name="Idesawa K."/>
            <person name="Iriguchi M."/>
            <person name="Kawashima K."/>
            <person name="Kohara M."/>
            <person name="Matsumoto M."/>
            <person name="Shimpo S."/>
            <person name="Tsuruoka H."/>
            <person name="Wada T."/>
            <person name="Yamada M."/>
            <person name="Tabata S."/>
        </authorList>
    </citation>
    <scope>NUCLEOTIDE SEQUENCE [LARGE SCALE GENOMIC DNA]</scope>
    <source>
        <strain>JCM 10833 / BCRC 13528 / IAM 13628 / NBRC 14792 / USDA 110</strain>
    </source>
</reference>
<protein>
    <recommendedName>
        <fullName evidence="1">Coenzyme PQQ synthesis protein B</fullName>
    </recommendedName>
    <alternativeName>
        <fullName evidence="1">Pyrroloquinoline quinone biosynthesis protein B</fullName>
    </alternativeName>
</protein>
<dbReference type="EMBL" id="BA000040">
    <property type="protein sequence ID" value="BAC52001.1"/>
    <property type="molecule type" value="Genomic_DNA"/>
</dbReference>
<dbReference type="RefSeq" id="NP_773376.1">
    <property type="nucleotide sequence ID" value="NC_004463.1"/>
</dbReference>
<dbReference type="RefSeq" id="WP_011089475.1">
    <property type="nucleotide sequence ID" value="NC_004463.1"/>
</dbReference>
<dbReference type="SMR" id="Q89FG4"/>
<dbReference type="STRING" id="224911.AAV28_31275"/>
<dbReference type="EnsemblBacteria" id="BAC52001">
    <property type="protein sequence ID" value="BAC52001"/>
    <property type="gene ID" value="BAC52001"/>
</dbReference>
<dbReference type="GeneID" id="46493710"/>
<dbReference type="KEGG" id="bja:blr6736"/>
<dbReference type="PATRIC" id="fig|224911.44.peg.6757"/>
<dbReference type="eggNOG" id="COG1235">
    <property type="taxonomic scope" value="Bacteria"/>
</dbReference>
<dbReference type="HOGENOM" id="CLU_061120_0_0_5"/>
<dbReference type="InParanoid" id="Q89FG4"/>
<dbReference type="OrthoDB" id="9778305at2"/>
<dbReference type="PhylomeDB" id="Q89FG4"/>
<dbReference type="UniPathway" id="UPA00539"/>
<dbReference type="Proteomes" id="UP000002526">
    <property type="component" value="Chromosome"/>
</dbReference>
<dbReference type="GO" id="GO:0018189">
    <property type="term" value="P:pyrroloquinoline quinone biosynthetic process"/>
    <property type="evidence" value="ECO:0007669"/>
    <property type="project" value="UniProtKB-UniRule"/>
</dbReference>
<dbReference type="Gene3D" id="3.60.15.10">
    <property type="entry name" value="Ribonuclease Z/Hydroxyacylglutathione hydrolase-like"/>
    <property type="match status" value="1"/>
</dbReference>
<dbReference type="HAMAP" id="MF_00653">
    <property type="entry name" value="PQQ_syn_PqqB"/>
    <property type="match status" value="1"/>
</dbReference>
<dbReference type="InterPro" id="IPR001279">
    <property type="entry name" value="Metallo-B-lactamas"/>
</dbReference>
<dbReference type="InterPro" id="IPR011842">
    <property type="entry name" value="PQQ_synth_PqqB"/>
</dbReference>
<dbReference type="InterPro" id="IPR036866">
    <property type="entry name" value="RibonucZ/Hydroxyglut_hydro"/>
</dbReference>
<dbReference type="NCBIfam" id="TIGR02108">
    <property type="entry name" value="PQQ_syn_pqqB"/>
    <property type="match status" value="1"/>
</dbReference>
<dbReference type="PANTHER" id="PTHR42663:SF7">
    <property type="entry name" value="COENZYME PQQ SYNTHESIS PROTEIN B"/>
    <property type="match status" value="1"/>
</dbReference>
<dbReference type="PANTHER" id="PTHR42663">
    <property type="entry name" value="HYDROLASE C777.06C-RELATED-RELATED"/>
    <property type="match status" value="1"/>
</dbReference>
<dbReference type="Pfam" id="PF12706">
    <property type="entry name" value="Lactamase_B_2"/>
    <property type="match status" value="1"/>
</dbReference>
<dbReference type="SUPFAM" id="SSF56281">
    <property type="entry name" value="Metallo-hydrolase/oxidoreductase"/>
    <property type="match status" value="1"/>
</dbReference>